<gene>
    <name type="primary">Csdc2</name>
    <name type="synonym">Pippin</name>
</gene>
<dbReference type="EMBL" id="X89962">
    <property type="protein sequence ID" value="CAA62001.2"/>
    <property type="status" value="ALT_INIT"/>
    <property type="molecule type" value="mRNA"/>
</dbReference>
<dbReference type="PIR" id="JC4588">
    <property type="entry name" value="JC4588"/>
</dbReference>
<dbReference type="RefSeq" id="NP_001164013.1">
    <property type="nucleotide sequence ID" value="NM_001170542.1"/>
</dbReference>
<dbReference type="SMR" id="Q63430"/>
<dbReference type="FunCoup" id="Q63430">
    <property type="interactions" value="646"/>
</dbReference>
<dbReference type="STRING" id="10116.ENSRNOP00000007091"/>
<dbReference type="iPTMnet" id="Q63430"/>
<dbReference type="PhosphoSitePlus" id="Q63430"/>
<dbReference type="PaxDb" id="10116-ENSRNOP00000007091"/>
<dbReference type="Ensembl" id="ENSRNOT00000007091.7">
    <property type="protein sequence ID" value="ENSRNOP00000007091.5"/>
    <property type="gene ID" value="ENSRNOG00000005332.7"/>
</dbReference>
<dbReference type="GeneID" id="266600"/>
<dbReference type="KEGG" id="rno:266600"/>
<dbReference type="UCSC" id="RGD:628780">
    <property type="organism name" value="rat"/>
</dbReference>
<dbReference type="AGR" id="RGD:628780"/>
<dbReference type="CTD" id="27254"/>
<dbReference type="RGD" id="628780">
    <property type="gene designation" value="Csdc2"/>
</dbReference>
<dbReference type="eggNOG" id="KOG3070">
    <property type="taxonomic scope" value="Eukaryota"/>
</dbReference>
<dbReference type="GeneTree" id="ENSGT00390000000022"/>
<dbReference type="HOGENOM" id="CLU_139526_1_0_1"/>
<dbReference type="InParanoid" id="Q63430"/>
<dbReference type="OMA" id="QFSRAQG"/>
<dbReference type="OrthoDB" id="448492at2759"/>
<dbReference type="PhylomeDB" id="Q63430"/>
<dbReference type="TreeFam" id="TF324381"/>
<dbReference type="PRO" id="PR:Q63430"/>
<dbReference type="Proteomes" id="UP000002494">
    <property type="component" value="Chromosome 7"/>
</dbReference>
<dbReference type="Bgee" id="ENSRNOG00000005332">
    <property type="expression patterns" value="Expressed in cerebellum and 18 other cell types or tissues"/>
</dbReference>
<dbReference type="GO" id="GO:0005737">
    <property type="term" value="C:cytoplasm"/>
    <property type="evidence" value="ECO:0000318"/>
    <property type="project" value="GO_Central"/>
</dbReference>
<dbReference type="GO" id="GO:0005634">
    <property type="term" value="C:nucleus"/>
    <property type="evidence" value="ECO:0007669"/>
    <property type="project" value="UniProtKB-SubCell"/>
</dbReference>
<dbReference type="GO" id="GO:0003730">
    <property type="term" value="F:mRNA 3'-UTR binding"/>
    <property type="evidence" value="ECO:0000318"/>
    <property type="project" value="GO_Central"/>
</dbReference>
<dbReference type="GO" id="GO:0003723">
    <property type="term" value="F:RNA binding"/>
    <property type="evidence" value="ECO:0000314"/>
    <property type="project" value="RGD"/>
</dbReference>
<dbReference type="GO" id="GO:0006397">
    <property type="term" value="P:mRNA processing"/>
    <property type="evidence" value="ECO:0007669"/>
    <property type="project" value="UniProtKB-KW"/>
</dbReference>
<dbReference type="GO" id="GO:0043488">
    <property type="term" value="P:regulation of mRNA stability"/>
    <property type="evidence" value="ECO:0000318"/>
    <property type="project" value="GO_Central"/>
</dbReference>
<dbReference type="CDD" id="cd04458">
    <property type="entry name" value="CSP_CDS"/>
    <property type="match status" value="1"/>
</dbReference>
<dbReference type="FunFam" id="2.40.50.140:FF:000086">
    <property type="entry name" value="Cold shock domain-containing protein C2"/>
    <property type="match status" value="1"/>
</dbReference>
<dbReference type="Gene3D" id="2.40.50.140">
    <property type="entry name" value="Nucleic acid-binding proteins"/>
    <property type="match status" value="1"/>
</dbReference>
<dbReference type="InterPro" id="IPR052069">
    <property type="entry name" value="Ca-reg_mRNA-binding_domain"/>
</dbReference>
<dbReference type="InterPro" id="IPR011129">
    <property type="entry name" value="CSD"/>
</dbReference>
<dbReference type="InterPro" id="IPR019844">
    <property type="entry name" value="CSD_CS"/>
</dbReference>
<dbReference type="InterPro" id="IPR002059">
    <property type="entry name" value="CSP_DNA-bd"/>
</dbReference>
<dbReference type="InterPro" id="IPR012340">
    <property type="entry name" value="NA-bd_OB-fold"/>
</dbReference>
<dbReference type="PANTHER" id="PTHR12962">
    <property type="entry name" value="CALCIUM-REGULATED HEAT STABLE PROTEIN CRHSP-24-RELATED"/>
    <property type="match status" value="1"/>
</dbReference>
<dbReference type="PANTHER" id="PTHR12962:SF4">
    <property type="entry name" value="COLD SHOCK DOMAIN-CONTAINING PROTEIN C2"/>
    <property type="match status" value="1"/>
</dbReference>
<dbReference type="Pfam" id="PF00313">
    <property type="entry name" value="CSD"/>
    <property type="match status" value="1"/>
</dbReference>
<dbReference type="SMART" id="SM00357">
    <property type="entry name" value="CSP"/>
    <property type="match status" value="1"/>
</dbReference>
<dbReference type="SUPFAM" id="SSF50249">
    <property type="entry name" value="Nucleic acid-binding proteins"/>
    <property type="match status" value="1"/>
</dbReference>
<dbReference type="PROSITE" id="PS00352">
    <property type="entry name" value="CSD_1"/>
    <property type="match status" value="1"/>
</dbReference>
<dbReference type="PROSITE" id="PS51857">
    <property type="entry name" value="CSD_2"/>
    <property type="match status" value="1"/>
</dbReference>
<sequence>MTSESTSPPVVPPLHSPKSPVWPTFPFHRESSRIWERGGGVSPRDLPSPLPTKRTRTYSATARASAGPVFKGVCKQFSRSQGHGFITPENGSEDIFVHVSDIEGEYVPVEGDEVTYKMCPIPPKNQKFQAVEVVLTQLAPHTPHETWSGQVVGS</sequence>
<keyword id="KW-0963">Cytoplasm</keyword>
<keyword id="KW-0507">mRNA processing</keyword>
<keyword id="KW-0539">Nucleus</keyword>
<keyword id="KW-0597">Phosphoprotein</keyword>
<keyword id="KW-1185">Reference proteome</keyword>
<keyword id="KW-0694">RNA-binding</keyword>
<reference key="1">
    <citation type="journal article" date="1996" name="Biochem. Biophys. Res. Commun.">
        <title>PIPPin, a putative RNA-binding protein specifically expressed in the rat brain.</title>
        <authorList>
            <person name="Castiglia D."/>
            <person name="Scaturro M."/>
            <person name="Nastasi T."/>
            <person name="Cestelli A."/>
            <person name="di Liegro I."/>
        </authorList>
    </citation>
    <scope>NUCLEOTIDE SEQUENCE [MRNA]</scope>
    <source>
        <strain>Sprague-Dawley</strain>
        <tissue>Brain</tissue>
    </source>
</reference>
<reference key="2">
    <citation type="journal article" date="1999" name="J. Biol. Chem.">
        <title>PIPPin is a brain-specific protein that contains a cold-shock domain and binds specifically to H1 degrees and H3.3 mRNAs.</title>
        <authorList>
            <person name="Nastasi T."/>
            <person name="Scaturro M."/>
            <person name="Bellafiore M."/>
            <person name="Raimondi L."/>
            <person name="Beccari S."/>
            <person name="Cestelli A."/>
            <person name="di Liegro I."/>
        </authorList>
    </citation>
    <scope>FUNCTION</scope>
</reference>
<reference key="3">
    <citation type="journal article" date="2000" name="NeuroReport">
        <title>Specific neurons of brain cortex and cerebellum are PIPPin positive.</title>
        <authorList>
            <person name="Nastasi T."/>
            <person name="Muzi P."/>
            <person name="Beccari S."/>
            <person name="Bellafiore M."/>
            <person name="Dolo V."/>
            <person name="Bologna M."/>
            <person name="Cestelli A."/>
            <person name="di Liegro I."/>
        </authorList>
    </citation>
    <scope>TISSUE SPECIFICITY</scope>
    <scope>DEVELOPMENTAL STAGE</scope>
</reference>
<reference key="4">
    <citation type="journal article" date="2012" name="Nat. Commun.">
        <title>Quantitative maps of protein phosphorylation sites across 14 different rat organs and tissues.</title>
        <authorList>
            <person name="Lundby A."/>
            <person name="Secher A."/>
            <person name="Lage K."/>
            <person name="Nordsborg N.B."/>
            <person name="Dmytriyev A."/>
            <person name="Lundby C."/>
            <person name="Olsen J.V."/>
        </authorList>
    </citation>
    <scope>PHOSPHORYLATION [LARGE SCALE ANALYSIS] AT SER-19</scope>
    <scope>IDENTIFICATION BY MASS SPECTROMETRY [LARGE SCALE ANALYSIS]</scope>
</reference>
<feature type="chain" id="PRO_0000100353" description="Cold shock domain-containing protein C2">
    <location>
        <begin position="1"/>
        <end position="154"/>
    </location>
</feature>
<feature type="domain" description="CSD">
    <location>
        <begin position="69"/>
        <end position="136"/>
    </location>
</feature>
<feature type="region of interest" description="Disordered" evidence="1">
    <location>
        <begin position="1"/>
        <end position="22"/>
    </location>
</feature>
<feature type="region of interest" description="Disordered" evidence="1">
    <location>
        <begin position="36"/>
        <end position="62"/>
    </location>
</feature>
<feature type="modified residue" description="Phosphoserine" evidence="5">
    <location>
        <position position="19"/>
    </location>
</feature>
<comment type="function">
    <text evidence="2">RNA-binding factor which binds specifically to the very 3'-UTR ends of both histone H1 and H3.3 mRNAs, encompassing the polyadenylation signal. Might play a central role in the negative regulation of histone variant synthesis in the developing brain.</text>
</comment>
<comment type="subcellular location">
    <subcellularLocation>
        <location>Nucleus</location>
    </subcellularLocation>
    <subcellularLocation>
        <location>Cytoplasm</location>
    </subcellularLocation>
    <text>PIPPin-RNA complexes are located to the nucleus.</text>
</comment>
<comment type="tissue specificity">
    <text evidence="3">Brain-specific. Expression restricted to the pyramidal neurons of the cerebral cortex and in the Purkinje cells of the cerebellum.</text>
</comment>
<comment type="developmental stage">
    <text evidence="3">At 18 dpc, expressed in the cerebellum.</text>
</comment>
<comment type="sequence caution" evidence="4">
    <conflict type="erroneous initiation">
        <sequence resource="EMBL-CDS" id="CAA62001"/>
    </conflict>
</comment>
<organism>
    <name type="scientific">Rattus norvegicus</name>
    <name type="common">Rat</name>
    <dbReference type="NCBI Taxonomy" id="10116"/>
    <lineage>
        <taxon>Eukaryota</taxon>
        <taxon>Metazoa</taxon>
        <taxon>Chordata</taxon>
        <taxon>Craniata</taxon>
        <taxon>Vertebrata</taxon>
        <taxon>Euteleostomi</taxon>
        <taxon>Mammalia</taxon>
        <taxon>Eutheria</taxon>
        <taxon>Euarchontoglires</taxon>
        <taxon>Glires</taxon>
        <taxon>Rodentia</taxon>
        <taxon>Myomorpha</taxon>
        <taxon>Muroidea</taxon>
        <taxon>Muridae</taxon>
        <taxon>Murinae</taxon>
        <taxon>Rattus</taxon>
    </lineage>
</organism>
<protein>
    <recommendedName>
        <fullName>Cold shock domain-containing protein C2</fullName>
    </recommendedName>
    <alternativeName>
        <fullName>RNA-binding protein PIPPin</fullName>
    </alternativeName>
</protein>
<proteinExistence type="evidence at protein level"/>
<name>CSDC2_RAT</name>
<evidence type="ECO:0000256" key="1">
    <source>
        <dbReference type="SAM" id="MobiDB-lite"/>
    </source>
</evidence>
<evidence type="ECO:0000269" key="2">
    <source>
    </source>
</evidence>
<evidence type="ECO:0000269" key="3">
    <source>
    </source>
</evidence>
<evidence type="ECO:0000305" key="4"/>
<evidence type="ECO:0007744" key="5">
    <source>
    </source>
</evidence>
<accession>Q63430</accession>